<evidence type="ECO:0000255" key="1">
    <source>
        <dbReference type="HAMAP-Rule" id="MF_01417"/>
    </source>
</evidence>
<comment type="function">
    <text evidence="1">Catalyzes the biosynthesis of agmatine from arginine.</text>
</comment>
<comment type="catalytic activity">
    <reaction evidence="1">
        <text>L-arginine + H(+) = agmatine + CO2</text>
        <dbReference type="Rhea" id="RHEA:17641"/>
        <dbReference type="ChEBI" id="CHEBI:15378"/>
        <dbReference type="ChEBI" id="CHEBI:16526"/>
        <dbReference type="ChEBI" id="CHEBI:32682"/>
        <dbReference type="ChEBI" id="CHEBI:58145"/>
        <dbReference type="EC" id="4.1.1.19"/>
    </reaction>
</comment>
<comment type="cofactor">
    <cofactor evidence="1">
        <name>Mg(2+)</name>
        <dbReference type="ChEBI" id="CHEBI:18420"/>
    </cofactor>
</comment>
<comment type="cofactor">
    <cofactor evidence="1">
        <name>pyridoxal 5'-phosphate</name>
        <dbReference type="ChEBI" id="CHEBI:597326"/>
    </cofactor>
</comment>
<comment type="pathway">
    <text evidence="1">Amine and polyamine biosynthesis; agmatine biosynthesis; agmatine from L-arginine: step 1/1.</text>
</comment>
<comment type="similarity">
    <text evidence="1">Belongs to the Orn/Lys/Arg decarboxylase class-II family. SpeA subfamily.</text>
</comment>
<name>SPEA_SALNS</name>
<gene>
    <name evidence="1" type="primary">speA</name>
    <name type="ordered locus">SNSL254_A3333</name>
</gene>
<sequence length="632" mass="71163">MSSQEASKMLRTYNIAWWGNNYYDVNELGHISVCPDPDVPEARVDLAKLVKAREAQGQRLPALFCFPQILQHRLRSINAAFKRARESYGYNGDYFLVYPIKVNQHRRVIESLIHSGEPLGLEAGSKAELMAVLAHAGMTRSVIVCNGYKDREYIRLALIGEKMGHKVYLVIEKMSEIAIVLEEAERLNVVPRLGVRARLASQGSGKWQSSGGEKSKFGLAATQVLQLVETLRDAGRLDSLQLLHFHLGSQMANIRDIATGVRESARFYVELHKLGVNIQCFDVGGGLGVDYEGTRSQSDCSVNYGLNEYANNIIWAIGDACEEHGLPHPTVITESGRAVTAHHTVLVSNIIGVERNEYTDPTAPAEDAPRALQNLWETWQEMHKPGTRRSLREWLHDSQMDLHDIHIGYSSGAFSLQERAWAEQLYLSMCHEVQKQLDPQNRAHRPIIDELQERMADKMYVNFSLFQSMPDAWGIDQLFPVLPLEGLDQVPERRAVLLDITCDSDGAIDHYIDGDGIATTMPMPEYDPENPPMLGFFMVGAYQEILGNMHNLFGDTEAVDVFVFPDGSVEVELSDEGDTVADMLQYVQLDPKTLLTHFRDQVKQTDLDDALQQQFLEEFEAGLYGYTYLEDE</sequence>
<organism>
    <name type="scientific">Salmonella newport (strain SL254)</name>
    <dbReference type="NCBI Taxonomy" id="423368"/>
    <lineage>
        <taxon>Bacteria</taxon>
        <taxon>Pseudomonadati</taxon>
        <taxon>Pseudomonadota</taxon>
        <taxon>Gammaproteobacteria</taxon>
        <taxon>Enterobacterales</taxon>
        <taxon>Enterobacteriaceae</taxon>
        <taxon>Salmonella</taxon>
    </lineage>
</organism>
<reference key="1">
    <citation type="journal article" date="2011" name="J. Bacteriol.">
        <title>Comparative genomics of 28 Salmonella enterica isolates: evidence for CRISPR-mediated adaptive sublineage evolution.</title>
        <authorList>
            <person name="Fricke W.F."/>
            <person name="Mammel M.K."/>
            <person name="McDermott P.F."/>
            <person name="Tartera C."/>
            <person name="White D.G."/>
            <person name="Leclerc J.E."/>
            <person name="Ravel J."/>
            <person name="Cebula T.A."/>
        </authorList>
    </citation>
    <scope>NUCLEOTIDE SEQUENCE [LARGE SCALE GENOMIC DNA]</scope>
    <source>
        <strain>SL254</strain>
    </source>
</reference>
<accession>B4T5J3</accession>
<feature type="chain" id="PRO_1000145601" description="Biosynthetic arginine decarboxylase">
    <location>
        <begin position="1"/>
        <end position="632"/>
    </location>
</feature>
<feature type="binding site" evidence="1">
    <location>
        <begin position="281"/>
        <end position="291"/>
    </location>
    <ligand>
        <name>substrate</name>
    </ligand>
</feature>
<feature type="modified residue" description="N6-(pyridoxal phosphate)lysine" evidence="1">
    <location>
        <position position="101"/>
    </location>
</feature>
<keyword id="KW-0210">Decarboxylase</keyword>
<keyword id="KW-0456">Lyase</keyword>
<keyword id="KW-0460">Magnesium</keyword>
<keyword id="KW-0479">Metal-binding</keyword>
<keyword id="KW-0620">Polyamine biosynthesis</keyword>
<keyword id="KW-0661">Putrescine biosynthesis</keyword>
<keyword id="KW-0663">Pyridoxal phosphate</keyword>
<keyword id="KW-0745">Spermidine biosynthesis</keyword>
<protein>
    <recommendedName>
        <fullName evidence="1">Biosynthetic arginine decarboxylase</fullName>
        <shortName evidence="1">ADC</shortName>
        <ecNumber evidence="1">4.1.1.19</ecNumber>
    </recommendedName>
</protein>
<dbReference type="EC" id="4.1.1.19" evidence="1"/>
<dbReference type="EMBL" id="CP001113">
    <property type="protein sequence ID" value="ACF61369.1"/>
    <property type="molecule type" value="Genomic_DNA"/>
</dbReference>
<dbReference type="SMR" id="B4T5J3"/>
<dbReference type="KEGG" id="see:SNSL254_A3333"/>
<dbReference type="HOGENOM" id="CLU_027243_1_0_6"/>
<dbReference type="UniPathway" id="UPA00186">
    <property type="reaction ID" value="UER00284"/>
</dbReference>
<dbReference type="Proteomes" id="UP000008824">
    <property type="component" value="Chromosome"/>
</dbReference>
<dbReference type="GO" id="GO:0008792">
    <property type="term" value="F:arginine decarboxylase activity"/>
    <property type="evidence" value="ECO:0007669"/>
    <property type="project" value="UniProtKB-UniRule"/>
</dbReference>
<dbReference type="GO" id="GO:0046872">
    <property type="term" value="F:metal ion binding"/>
    <property type="evidence" value="ECO:0007669"/>
    <property type="project" value="UniProtKB-KW"/>
</dbReference>
<dbReference type="GO" id="GO:0006527">
    <property type="term" value="P:arginine catabolic process"/>
    <property type="evidence" value="ECO:0007669"/>
    <property type="project" value="InterPro"/>
</dbReference>
<dbReference type="GO" id="GO:0033388">
    <property type="term" value="P:putrescine biosynthetic process from arginine"/>
    <property type="evidence" value="ECO:0007669"/>
    <property type="project" value="TreeGrafter"/>
</dbReference>
<dbReference type="GO" id="GO:0008295">
    <property type="term" value="P:spermidine biosynthetic process"/>
    <property type="evidence" value="ECO:0007669"/>
    <property type="project" value="UniProtKB-UniRule"/>
</dbReference>
<dbReference type="CDD" id="cd06830">
    <property type="entry name" value="PLPDE_III_ADC"/>
    <property type="match status" value="1"/>
</dbReference>
<dbReference type="FunFam" id="1.10.287.3440:FF:000001">
    <property type="entry name" value="Biosynthetic arginine decarboxylase"/>
    <property type="match status" value="1"/>
</dbReference>
<dbReference type="FunFam" id="1.20.58.930:FF:000001">
    <property type="entry name" value="Biosynthetic arginine decarboxylase"/>
    <property type="match status" value="1"/>
</dbReference>
<dbReference type="FunFam" id="2.40.37.10:FF:000001">
    <property type="entry name" value="Biosynthetic arginine decarboxylase"/>
    <property type="match status" value="1"/>
</dbReference>
<dbReference type="FunFam" id="3.20.20.10:FF:000001">
    <property type="entry name" value="Biosynthetic arginine decarboxylase"/>
    <property type="match status" value="1"/>
</dbReference>
<dbReference type="Gene3D" id="1.10.287.3440">
    <property type="match status" value="1"/>
</dbReference>
<dbReference type="Gene3D" id="1.20.58.930">
    <property type="match status" value="1"/>
</dbReference>
<dbReference type="Gene3D" id="3.20.20.10">
    <property type="entry name" value="Alanine racemase"/>
    <property type="match status" value="1"/>
</dbReference>
<dbReference type="Gene3D" id="2.40.37.10">
    <property type="entry name" value="Lyase, Ornithine Decarboxylase, Chain A, domain 1"/>
    <property type="match status" value="1"/>
</dbReference>
<dbReference type="HAMAP" id="MF_01417">
    <property type="entry name" value="SpeA"/>
    <property type="match status" value="1"/>
</dbReference>
<dbReference type="InterPro" id="IPR009006">
    <property type="entry name" value="Ala_racemase/Decarboxylase_C"/>
</dbReference>
<dbReference type="InterPro" id="IPR040634">
    <property type="entry name" value="Arg_decarb_HB"/>
</dbReference>
<dbReference type="InterPro" id="IPR041128">
    <property type="entry name" value="Arg_decarbox_C"/>
</dbReference>
<dbReference type="InterPro" id="IPR002985">
    <property type="entry name" value="Arg_decrbxlase"/>
</dbReference>
<dbReference type="InterPro" id="IPR022657">
    <property type="entry name" value="De-COase2_CS"/>
</dbReference>
<dbReference type="InterPro" id="IPR022644">
    <property type="entry name" value="De-COase2_N"/>
</dbReference>
<dbReference type="InterPro" id="IPR022653">
    <property type="entry name" value="De-COase2_pyr-phos_BS"/>
</dbReference>
<dbReference type="InterPro" id="IPR000183">
    <property type="entry name" value="Orn/DAP/Arg_de-COase"/>
</dbReference>
<dbReference type="InterPro" id="IPR029066">
    <property type="entry name" value="PLP-binding_barrel"/>
</dbReference>
<dbReference type="NCBIfam" id="NF003763">
    <property type="entry name" value="PRK05354.1"/>
    <property type="match status" value="1"/>
</dbReference>
<dbReference type="NCBIfam" id="TIGR01273">
    <property type="entry name" value="speA"/>
    <property type="match status" value="1"/>
</dbReference>
<dbReference type="PANTHER" id="PTHR43295">
    <property type="entry name" value="ARGININE DECARBOXYLASE"/>
    <property type="match status" value="1"/>
</dbReference>
<dbReference type="PANTHER" id="PTHR43295:SF9">
    <property type="entry name" value="BIOSYNTHETIC ARGININE DECARBOXYLASE"/>
    <property type="match status" value="1"/>
</dbReference>
<dbReference type="Pfam" id="PF17810">
    <property type="entry name" value="Arg_decarb_HB"/>
    <property type="match status" value="1"/>
</dbReference>
<dbReference type="Pfam" id="PF17944">
    <property type="entry name" value="Arg_decarbox_C"/>
    <property type="match status" value="1"/>
</dbReference>
<dbReference type="Pfam" id="PF02784">
    <property type="entry name" value="Orn_Arg_deC_N"/>
    <property type="match status" value="1"/>
</dbReference>
<dbReference type="PIRSF" id="PIRSF001336">
    <property type="entry name" value="Arg_decrbxlase"/>
    <property type="match status" value="1"/>
</dbReference>
<dbReference type="PRINTS" id="PR01180">
    <property type="entry name" value="ARGDCRBXLASE"/>
</dbReference>
<dbReference type="PRINTS" id="PR01179">
    <property type="entry name" value="ODADCRBXLASE"/>
</dbReference>
<dbReference type="SUPFAM" id="SSF50621">
    <property type="entry name" value="Alanine racemase C-terminal domain-like"/>
    <property type="match status" value="1"/>
</dbReference>
<dbReference type="SUPFAM" id="SSF51419">
    <property type="entry name" value="PLP-binding barrel"/>
    <property type="match status" value="1"/>
</dbReference>
<dbReference type="PROSITE" id="PS00878">
    <property type="entry name" value="ODR_DC_2_1"/>
    <property type="match status" value="1"/>
</dbReference>
<dbReference type="PROSITE" id="PS00879">
    <property type="entry name" value="ODR_DC_2_2"/>
    <property type="match status" value="1"/>
</dbReference>
<proteinExistence type="inferred from homology"/>